<proteinExistence type="inferred from homology"/>
<protein>
    <recommendedName>
        <fullName evidence="1">Peptide chain release factor 1</fullName>
        <shortName evidence="1">RF-1</shortName>
    </recommendedName>
</protein>
<feature type="chain" id="PRO_1000004960" description="Peptide chain release factor 1">
    <location>
        <begin position="1"/>
        <end position="359"/>
    </location>
</feature>
<feature type="modified residue" description="N5-methylglutamine" evidence="1">
    <location>
        <position position="236"/>
    </location>
</feature>
<name>RF1_STRTD</name>
<accession>Q03L79</accession>
<evidence type="ECO:0000255" key="1">
    <source>
        <dbReference type="HAMAP-Rule" id="MF_00093"/>
    </source>
</evidence>
<gene>
    <name evidence="1" type="primary">prfA</name>
    <name type="ordered locus">STER_0793</name>
</gene>
<reference key="1">
    <citation type="journal article" date="2006" name="Proc. Natl. Acad. Sci. U.S.A.">
        <title>Comparative genomics of the lactic acid bacteria.</title>
        <authorList>
            <person name="Makarova K.S."/>
            <person name="Slesarev A."/>
            <person name="Wolf Y.I."/>
            <person name="Sorokin A."/>
            <person name="Mirkin B."/>
            <person name="Koonin E.V."/>
            <person name="Pavlov A."/>
            <person name="Pavlova N."/>
            <person name="Karamychev V."/>
            <person name="Polouchine N."/>
            <person name="Shakhova V."/>
            <person name="Grigoriev I."/>
            <person name="Lou Y."/>
            <person name="Rohksar D."/>
            <person name="Lucas S."/>
            <person name="Huang K."/>
            <person name="Goodstein D.M."/>
            <person name="Hawkins T."/>
            <person name="Plengvidhya V."/>
            <person name="Welker D."/>
            <person name="Hughes J."/>
            <person name="Goh Y."/>
            <person name="Benson A."/>
            <person name="Baldwin K."/>
            <person name="Lee J.-H."/>
            <person name="Diaz-Muniz I."/>
            <person name="Dosti B."/>
            <person name="Smeianov V."/>
            <person name="Wechter W."/>
            <person name="Barabote R."/>
            <person name="Lorca G."/>
            <person name="Altermann E."/>
            <person name="Barrangou R."/>
            <person name="Ganesan B."/>
            <person name="Xie Y."/>
            <person name="Rawsthorne H."/>
            <person name="Tamir D."/>
            <person name="Parker C."/>
            <person name="Breidt F."/>
            <person name="Broadbent J.R."/>
            <person name="Hutkins R."/>
            <person name="O'Sullivan D."/>
            <person name="Steele J."/>
            <person name="Unlu G."/>
            <person name="Saier M.H. Jr."/>
            <person name="Klaenhammer T."/>
            <person name="Richardson P."/>
            <person name="Kozyavkin S."/>
            <person name="Weimer B.C."/>
            <person name="Mills D.A."/>
        </authorList>
    </citation>
    <scope>NUCLEOTIDE SEQUENCE [LARGE SCALE GENOMIC DNA]</scope>
    <source>
        <strain>ATCC BAA-491 / LMD-9</strain>
    </source>
</reference>
<sequence>MNIYDQLQAVEDRYEELGELLSDPEVVSDTKRFMELSREEANTRETVIAYREYKQVIQNISDAEEMIKEASGDADLEEMAKEELKKSKAAKEEYEERLKILLLPKDPNDDKNIILEIRGAAGGDEAALFAGDLLAMYQKYAETQGWRFEVMEASYNGVGGIKEVVAMVSGESVYSKLKYESGAHRVQRVPVTESQGRVHTSTATVLVMPEVEEMEYEIDPKDLRVDIYHASGAGGQNVNKVATAVRMVHIPTGIKVEMQEERTQQKNRDKALKIIRARVADHFAQIAQDEQDAERKSTVGTGDRSERIRTYNFPQNRVTDHRIGLTLQKLDTILAGKMDEVIDALVLYDQTQKLEELNK</sequence>
<organism>
    <name type="scientific">Streptococcus thermophilus (strain ATCC BAA-491 / LMD-9)</name>
    <dbReference type="NCBI Taxonomy" id="322159"/>
    <lineage>
        <taxon>Bacteria</taxon>
        <taxon>Bacillati</taxon>
        <taxon>Bacillota</taxon>
        <taxon>Bacilli</taxon>
        <taxon>Lactobacillales</taxon>
        <taxon>Streptococcaceae</taxon>
        <taxon>Streptococcus</taxon>
    </lineage>
</organism>
<dbReference type="EMBL" id="CP000419">
    <property type="protein sequence ID" value="ABJ66043.1"/>
    <property type="molecule type" value="Genomic_DNA"/>
</dbReference>
<dbReference type="RefSeq" id="WP_002948472.1">
    <property type="nucleotide sequence ID" value="NC_008532.1"/>
</dbReference>
<dbReference type="SMR" id="Q03L79"/>
<dbReference type="GeneID" id="66898650"/>
<dbReference type="KEGG" id="ste:STER_0793"/>
<dbReference type="HOGENOM" id="CLU_036856_0_1_9"/>
<dbReference type="GO" id="GO:0005737">
    <property type="term" value="C:cytoplasm"/>
    <property type="evidence" value="ECO:0007669"/>
    <property type="project" value="UniProtKB-SubCell"/>
</dbReference>
<dbReference type="GO" id="GO:0016149">
    <property type="term" value="F:translation release factor activity, codon specific"/>
    <property type="evidence" value="ECO:0007669"/>
    <property type="project" value="UniProtKB-UniRule"/>
</dbReference>
<dbReference type="FunFam" id="3.30.160.20:FF:000027">
    <property type="entry name" value="Peptide chain release factor 1"/>
    <property type="match status" value="1"/>
</dbReference>
<dbReference type="FunFam" id="3.30.70.1660:FF:000002">
    <property type="entry name" value="Peptide chain release factor 1"/>
    <property type="match status" value="1"/>
</dbReference>
<dbReference type="FunFam" id="3.30.70.1660:FF:000004">
    <property type="entry name" value="Peptide chain release factor 1"/>
    <property type="match status" value="1"/>
</dbReference>
<dbReference type="Gene3D" id="3.30.160.20">
    <property type="match status" value="1"/>
</dbReference>
<dbReference type="Gene3D" id="3.30.70.1660">
    <property type="match status" value="2"/>
</dbReference>
<dbReference type="Gene3D" id="6.10.140.1950">
    <property type="match status" value="1"/>
</dbReference>
<dbReference type="HAMAP" id="MF_00093">
    <property type="entry name" value="Rel_fac_1"/>
    <property type="match status" value="1"/>
</dbReference>
<dbReference type="InterPro" id="IPR005139">
    <property type="entry name" value="PCRF"/>
</dbReference>
<dbReference type="InterPro" id="IPR000352">
    <property type="entry name" value="Pep_chain_release_fac_I"/>
</dbReference>
<dbReference type="InterPro" id="IPR045853">
    <property type="entry name" value="Pep_chain_release_fac_I_sf"/>
</dbReference>
<dbReference type="InterPro" id="IPR050057">
    <property type="entry name" value="Prokaryotic/Mito_RF"/>
</dbReference>
<dbReference type="InterPro" id="IPR004373">
    <property type="entry name" value="RF-1"/>
</dbReference>
<dbReference type="NCBIfam" id="TIGR00019">
    <property type="entry name" value="prfA"/>
    <property type="match status" value="1"/>
</dbReference>
<dbReference type="NCBIfam" id="NF001859">
    <property type="entry name" value="PRK00591.1"/>
    <property type="match status" value="1"/>
</dbReference>
<dbReference type="PANTHER" id="PTHR43804">
    <property type="entry name" value="LD18447P"/>
    <property type="match status" value="1"/>
</dbReference>
<dbReference type="PANTHER" id="PTHR43804:SF7">
    <property type="entry name" value="LD18447P"/>
    <property type="match status" value="1"/>
</dbReference>
<dbReference type="Pfam" id="PF03462">
    <property type="entry name" value="PCRF"/>
    <property type="match status" value="1"/>
</dbReference>
<dbReference type="Pfam" id="PF00472">
    <property type="entry name" value="RF-1"/>
    <property type="match status" value="1"/>
</dbReference>
<dbReference type="SMART" id="SM00937">
    <property type="entry name" value="PCRF"/>
    <property type="match status" value="1"/>
</dbReference>
<dbReference type="SUPFAM" id="SSF75620">
    <property type="entry name" value="Release factor"/>
    <property type="match status" value="1"/>
</dbReference>
<dbReference type="PROSITE" id="PS00745">
    <property type="entry name" value="RF_PROK_I"/>
    <property type="match status" value="1"/>
</dbReference>
<keyword id="KW-0963">Cytoplasm</keyword>
<keyword id="KW-0488">Methylation</keyword>
<keyword id="KW-0648">Protein biosynthesis</keyword>
<comment type="function">
    <text evidence="1">Peptide chain release factor 1 directs the termination of translation in response to the peptide chain termination codons UAG and UAA.</text>
</comment>
<comment type="subcellular location">
    <subcellularLocation>
        <location evidence="1">Cytoplasm</location>
    </subcellularLocation>
</comment>
<comment type="PTM">
    <text evidence="1">Methylated by PrmC. Methylation increases the termination efficiency of RF1.</text>
</comment>
<comment type="similarity">
    <text evidence="1">Belongs to the prokaryotic/mitochondrial release factor family.</text>
</comment>